<sequence length="95" mass="11336">MLTLQAETRKEKGTGFSRRLRIHNKFPAVLYGVKKTEILLILDHNTTFNLQKKIEFYKENLLLCVQDKKYKVKVQAIQRHSFKSKLLHIDFLYVE</sequence>
<protein>
    <recommendedName>
        <fullName evidence="1">Large ribosomal subunit protein bL25</fullName>
    </recommendedName>
    <alternativeName>
        <fullName evidence="2">50S ribosomal protein L25</fullName>
    </alternativeName>
</protein>
<organism>
    <name type="scientific">Buchnera aphidicola subsp. Acyrthosiphon pisum (strain 5A)</name>
    <dbReference type="NCBI Taxonomy" id="563178"/>
    <lineage>
        <taxon>Bacteria</taxon>
        <taxon>Pseudomonadati</taxon>
        <taxon>Pseudomonadota</taxon>
        <taxon>Gammaproteobacteria</taxon>
        <taxon>Enterobacterales</taxon>
        <taxon>Erwiniaceae</taxon>
        <taxon>Buchnera</taxon>
    </lineage>
</organism>
<dbReference type="EMBL" id="CP001161">
    <property type="protein sequence ID" value="ACL30511.1"/>
    <property type="molecule type" value="Genomic_DNA"/>
</dbReference>
<dbReference type="RefSeq" id="WP_009874094.1">
    <property type="nucleotide sequence ID" value="NC_011833.1"/>
</dbReference>
<dbReference type="SMR" id="B8D8T9"/>
<dbReference type="KEGG" id="bap:BUAP5A_136"/>
<dbReference type="HOGENOM" id="CLU_137946_0_0_6"/>
<dbReference type="OrthoDB" id="9806411at2"/>
<dbReference type="Proteomes" id="UP000006904">
    <property type="component" value="Chromosome"/>
</dbReference>
<dbReference type="GO" id="GO:0022625">
    <property type="term" value="C:cytosolic large ribosomal subunit"/>
    <property type="evidence" value="ECO:0007669"/>
    <property type="project" value="TreeGrafter"/>
</dbReference>
<dbReference type="GO" id="GO:0008097">
    <property type="term" value="F:5S rRNA binding"/>
    <property type="evidence" value="ECO:0007669"/>
    <property type="project" value="InterPro"/>
</dbReference>
<dbReference type="GO" id="GO:0003735">
    <property type="term" value="F:structural constituent of ribosome"/>
    <property type="evidence" value="ECO:0007669"/>
    <property type="project" value="InterPro"/>
</dbReference>
<dbReference type="GO" id="GO:0006412">
    <property type="term" value="P:translation"/>
    <property type="evidence" value="ECO:0007669"/>
    <property type="project" value="UniProtKB-UniRule"/>
</dbReference>
<dbReference type="CDD" id="cd00495">
    <property type="entry name" value="Ribosomal_L25_TL5_CTC"/>
    <property type="match status" value="1"/>
</dbReference>
<dbReference type="FunFam" id="2.40.240.10:FF:000002">
    <property type="entry name" value="50S ribosomal protein L25"/>
    <property type="match status" value="1"/>
</dbReference>
<dbReference type="Gene3D" id="2.40.240.10">
    <property type="entry name" value="Ribosomal Protein L25, Chain P"/>
    <property type="match status" value="1"/>
</dbReference>
<dbReference type="HAMAP" id="MF_01336">
    <property type="entry name" value="Ribosomal_bL25"/>
    <property type="match status" value="1"/>
</dbReference>
<dbReference type="InterPro" id="IPR020056">
    <property type="entry name" value="Rbsml_bL25/Gln-tRNA_synth_N"/>
</dbReference>
<dbReference type="InterPro" id="IPR011035">
    <property type="entry name" value="Ribosomal_bL25/Gln-tRNA_synth"/>
</dbReference>
<dbReference type="InterPro" id="IPR020055">
    <property type="entry name" value="Ribosomal_bL25_short"/>
</dbReference>
<dbReference type="InterPro" id="IPR029751">
    <property type="entry name" value="Ribosomal_L25_dom"/>
</dbReference>
<dbReference type="InterPro" id="IPR020930">
    <property type="entry name" value="Ribosomal_uL5_bac-type"/>
</dbReference>
<dbReference type="NCBIfam" id="NF004612">
    <property type="entry name" value="PRK05943.1"/>
    <property type="match status" value="1"/>
</dbReference>
<dbReference type="PANTHER" id="PTHR33284">
    <property type="entry name" value="RIBOSOMAL PROTEIN L25/GLN-TRNA SYNTHETASE, ANTI-CODON-BINDING DOMAIN-CONTAINING PROTEIN"/>
    <property type="match status" value="1"/>
</dbReference>
<dbReference type="PANTHER" id="PTHR33284:SF1">
    <property type="entry name" value="RIBOSOMAL PROTEIN L25_GLN-TRNA SYNTHETASE, ANTI-CODON-BINDING DOMAIN-CONTAINING PROTEIN"/>
    <property type="match status" value="1"/>
</dbReference>
<dbReference type="Pfam" id="PF01386">
    <property type="entry name" value="Ribosomal_L25p"/>
    <property type="match status" value="1"/>
</dbReference>
<dbReference type="SUPFAM" id="SSF50715">
    <property type="entry name" value="Ribosomal protein L25-like"/>
    <property type="match status" value="1"/>
</dbReference>
<accession>B8D8T9</accession>
<feature type="chain" id="PRO_1000166188" description="Large ribosomal subunit protein bL25">
    <location>
        <begin position="1"/>
        <end position="95"/>
    </location>
</feature>
<gene>
    <name evidence="1" type="primary">rplY</name>
    <name type="ordered locus">BUAP5A_136</name>
</gene>
<keyword id="KW-0687">Ribonucleoprotein</keyword>
<keyword id="KW-0689">Ribosomal protein</keyword>
<keyword id="KW-0694">RNA-binding</keyword>
<keyword id="KW-0699">rRNA-binding</keyword>
<evidence type="ECO:0000255" key="1">
    <source>
        <dbReference type="HAMAP-Rule" id="MF_01336"/>
    </source>
</evidence>
<evidence type="ECO:0000305" key="2"/>
<comment type="function">
    <text evidence="1">This is one of the proteins that binds to the 5S RNA in the ribosome where it forms part of the central protuberance.</text>
</comment>
<comment type="subunit">
    <text evidence="1">Part of the 50S ribosomal subunit; part of the 5S rRNA/L5/L18/L25 subcomplex. Contacts the 5S rRNA. Binds to the 5S rRNA independently of L5 and L18.</text>
</comment>
<comment type="similarity">
    <text evidence="1">Belongs to the bacterial ribosomal protein bL25 family.</text>
</comment>
<reference key="1">
    <citation type="journal article" date="2009" name="Science">
        <title>The dynamics and time scale of ongoing genomic erosion in symbiotic bacteria.</title>
        <authorList>
            <person name="Moran N.A."/>
            <person name="McLaughlin H.J."/>
            <person name="Sorek R."/>
        </authorList>
    </citation>
    <scope>NUCLEOTIDE SEQUENCE [LARGE SCALE GENOMIC DNA]</scope>
    <source>
        <strain>5A</strain>
    </source>
</reference>
<proteinExistence type="inferred from homology"/>
<name>RL25_BUCA5</name>